<sequence>MKVSAVLLCLLLMTAAFNPQGLAQPDALNVPSTCCFTFSSKKISLQRLKSYVITTSRCPQKAVIFRTKLGKEICADPKEKWVQNYMKHLGRKAHTLKT</sequence>
<accession>Q99616</accession>
<accession>O95689</accession>
<accession>Q6ICQ6</accession>
<keyword id="KW-0002">3D-structure</keyword>
<keyword id="KW-0145">Chemotaxis</keyword>
<keyword id="KW-0202">Cytokine</keyword>
<keyword id="KW-0903">Direct protein sequencing</keyword>
<keyword id="KW-1015">Disulfide bond</keyword>
<keyword id="KW-0395">Inflammatory response</keyword>
<keyword id="KW-1267">Proteomics identification</keyword>
<keyword id="KW-0873">Pyrrolidone carboxylic acid</keyword>
<keyword id="KW-1185">Reference proteome</keyword>
<keyword id="KW-0964">Secreted</keyword>
<keyword id="KW-0732">Signal</keyword>
<reference key="1">
    <citation type="journal article" date="1996" name="Eur. Cytokine Netw.">
        <title>Cloning and characterization of MCP-4, a novel CC chemokine related to MCP-1 and eotaxin.</title>
        <authorList>
            <person name="Power C.A."/>
            <person name="Meyer A."/>
            <person name="Rison S.C.G."/>
            <person name="Guye-Coulin F."/>
            <person name="Wells T.N.C."/>
        </authorList>
    </citation>
    <scope>NUCLEOTIDE SEQUENCE [MRNA]</scope>
    <source>
        <tissue>Lung</tissue>
    </source>
</reference>
<reference key="2">
    <citation type="journal article" date="1996" name="J. Immunol.">
        <title>Human monocyte chemoattractant protein (MCP)-4 is a novel CC chemokine with activities on monocytes, eosinophils, and basophils induced in allergic and nonallergic inflammation that signals through the CC chemokine receptors (CCR)-2 and -3.</title>
        <authorList>
            <person name="Garcia-Zepeda E.A."/>
            <person name="Combadiere C."/>
            <person name="Rothenberg M.E."/>
            <person name="Sarafi M.N."/>
            <person name="Lavigne F."/>
            <person name="Hamid Q."/>
            <person name="Murphy P.M."/>
            <person name="Luster A.D."/>
        </authorList>
    </citation>
    <scope>NUCLEOTIDE SEQUENCE [MRNA]</scope>
    <source>
        <tissue>Heart</tissue>
    </source>
</reference>
<reference key="3">
    <citation type="journal article" date="1996" name="J. Exp. Med.">
        <title>Monocyte chemotactic protein 4 (MCP-4), a novel structural and functional analogue of MCP-3 and eotaxin.</title>
        <authorList>
            <person name="Uguccioni M."/>
            <person name="Loetscher P."/>
            <person name="Forssmann U."/>
            <person name="Dewald B."/>
            <person name="Li H."/>
            <person name="Lima S.H."/>
            <person name="Li Y."/>
            <person name="Kreider B."/>
            <person name="Garotta G."/>
            <person name="Thelen M."/>
            <person name="Baggiolini M."/>
        </authorList>
    </citation>
    <scope>NUCLEOTIDE SEQUENCE [MRNA]</scope>
    <scope>PROTEIN SEQUENCE OF 17-98</scope>
    <scope>PYROGLUTAMATE FORMATION AT GLN-24</scope>
    <scope>MASS SPECTROMETRY</scope>
    <source>
        <tissue>Fetus</tissue>
    </source>
</reference>
<reference key="4">
    <citation type="journal article" date="1997" name="J. Biol. Chem.">
        <title>Cloning, in vitro expression, and functional characterization of a novel human CC chemokine of the monocyte chemotactic protein (MCP) family (MCP-4) that binds and signals through the CC chemokine receptor 2B.</title>
        <authorList>
            <person name="Berkhout T.A."/>
            <person name="Sarau H.M."/>
            <person name="Moores K."/>
            <person name="White J.R."/>
            <person name="Elshourbagy N."/>
            <person name="Appelbaum E."/>
            <person name="Reape T.J."/>
            <person name="Brawner M."/>
            <person name="Makwana J."/>
            <person name="Foley J.J."/>
            <person name="Schmidt D.B."/>
            <person name="Imburgia C."/>
            <person name="Macnulty D."/>
            <person name="Matthews J."/>
            <person name="O'Donnell K."/>
            <person name="O'Shannessy D."/>
            <person name="Scott M."/>
            <person name="Groot P.H.E."/>
            <person name="Macphee C."/>
        </authorList>
    </citation>
    <scope>NUCLEOTIDE SEQUENCE [MRNA]</scope>
    <scope>PROTEIN SEQUENCE OF 22-33</scope>
    <scope>IDENTIFICATION BY MASS SPECTROMETRY</scope>
    <source>
        <tissue>Fetus</tissue>
    </source>
</reference>
<reference key="5">
    <citation type="journal article" date="1997" name="J. Leukoc. Biol.">
        <title>Monocyte chemotactic protein-4: tissue-specific expression and signaling through CC chemokine receptor-2.</title>
        <authorList>
            <person name="Godiska R."/>
            <person name="Chantry D."/>
            <person name="Raport C.J."/>
            <person name="Schweickart V.L."/>
            <person name="Trong H.L."/>
            <person name="Gray P.W."/>
        </authorList>
    </citation>
    <scope>NUCLEOTIDE SEQUENCE [MRNA]</scope>
</reference>
<reference key="6">
    <citation type="journal article" date="1999" name="Biochem. Biophys. Res. Commun.">
        <title>Genomic organization, sequence analysis and transcriptional regulation of the human MCP-4 chemokine gene (SCYA13) in dermal fibroblasts: a comparison to other eosinophilic beta-chemokines.</title>
        <authorList>
            <person name="Hein H."/>
            <person name="Schluter C."/>
            <person name="Kulke R."/>
            <person name="Christophers E."/>
            <person name="Schroeder J.-M."/>
            <person name="Bartels J."/>
        </authorList>
    </citation>
    <scope>NUCLEOTIDE SEQUENCE [MRNA]</scope>
    <source>
        <tissue>Skin fibroblast</tissue>
    </source>
</reference>
<reference key="7">
    <citation type="submission" date="2003-05" db="EMBL/GenBank/DDBJ databases">
        <title>Cloning of human full-length CDSs in BD Creator(TM) system donor vector.</title>
        <authorList>
            <person name="Kalnine N."/>
            <person name="Chen X."/>
            <person name="Rolfs A."/>
            <person name="Halleck A."/>
            <person name="Hines L."/>
            <person name="Eisenstein S."/>
            <person name="Koundinya M."/>
            <person name="Raphael J."/>
            <person name="Moreira D."/>
            <person name="Kelley T."/>
            <person name="LaBaer J."/>
            <person name="Lin Y."/>
            <person name="Phelan M."/>
            <person name="Farmer A."/>
        </authorList>
    </citation>
    <scope>NUCLEOTIDE SEQUENCE [LARGE SCALE MRNA]</scope>
</reference>
<reference key="8">
    <citation type="submission" date="2004-05" db="EMBL/GenBank/DDBJ databases">
        <title>Cloning of human full open reading frames in Gateway(TM) system entry vector (pDONR201).</title>
        <authorList>
            <person name="Ebert L."/>
            <person name="Schick M."/>
            <person name="Neubert P."/>
            <person name="Schatten R."/>
            <person name="Henze S."/>
            <person name="Korn B."/>
        </authorList>
    </citation>
    <scope>NUCLEOTIDE SEQUENCE [LARGE SCALE MRNA]</scope>
</reference>
<reference key="9">
    <citation type="journal article" date="2006" name="Nature">
        <title>DNA sequence of human chromosome 17 and analysis of rearrangement in the human lineage.</title>
        <authorList>
            <person name="Zody M.C."/>
            <person name="Garber M."/>
            <person name="Adams D.J."/>
            <person name="Sharpe T."/>
            <person name="Harrow J."/>
            <person name="Lupski J.R."/>
            <person name="Nicholson C."/>
            <person name="Searle S.M."/>
            <person name="Wilming L."/>
            <person name="Young S.K."/>
            <person name="Abouelleil A."/>
            <person name="Allen N.R."/>
            <person name="Bi W."/>
            <person name="Bloom T."/>
            <person name="Borowsky M.L."/>
            <person name="Bugalter B.E."/>
            <person name="Butler J."/>
            <person name="Chang J.L."/>
            <person name="Chen C.-K."/>
            <person name="Cook A."/>
            <person name="Corum B."/>
            <person name="Cuomo C.A."/>
            <person name="de Jong P.J."/>
            <person name="DeCaprio D."/>
            <person name="Dewar K."/>
            <person name="FitzGerald M."/>
            <person name="Gilbert J."/>
            <person name="Gibson R."/>
            <person name="Gnerre S."/>
            <person name="Goldstein S."/>
            <person name="Grafham D.V."/>
            <person name="Grocock R."/>
            <person name="Hafez N."/>
            <person name="Hagopian D.S."/>
            <person name="Hart E."/>
            <person name="Norman C.H."/>
            <person name="Humphray S."/>
            <person name="Jaffe D.B."/>
            <person name="Jones M."/>
            <person name="Kamal M."/>
            <person name="Khodiyar V.K."/>
            <person name="LaButti K."/>
            <person name="Laird G."/>
            <person name="Lehoczky J."/>
            <person name="Liu X."/>
            <person name="Lokyitsang T."/>
            <person name="Loveland J."/>
            <person name="Lui A."/>
            <person name="Macdonald P."/>
            <person name="Major J.E."/>
            <person name="Matthews L."/>
            <person name="Mauceli E."/>
            <person name="McCarroll S.A."/>
            <person name="Mihalev A.H."/>
            <person name="Mudge J."/>
            <person name="Nguyen C."/>
            <person name="Nicol R."/>
            <person name="O'Leary S.B."/>
            <person name="Osoegawa K."/>
            <person name="Schwartz D.C."/>
            <person name="Shaw-Smith C."/>
            <person name="Stankiewicz P."/>
            <person name="Steward C."/>
            <person name="Swarbreck D."/>
            <person name="Venkataraman V."/>
            <person name="Whittaker C.A."/>
            <person name="Yang X."/>
            <person name="Zimmer A.R."/>
            <person name="Bradley A."/>
            <person name="Hubbard T."/>
            <person name="Birren B.W."/>
            <person name="Rogers J."/>
            <person name="Lander E.S."/>
            <person name="Nusbaum C."/>
        </authorList>
    </citation>
    <scope>NUCLEOTIDE SEQUENCE [LARGE SCALE GENOMIC DNA]</scope>
</reference>
<reference key="10">
    <citation type="submission" date="2005-09" db="EMBL/GenBank/DDBJ databases">
        <authorList>
            <person name="Mural R.J."/>
            <person name="Istrail S."/>
            <person name="Sutton G.G."/>
            <person name="Florea L."/>
            <person name="Halpern A.L."/>
            <person name="Mobarry C.M."/>
            <person name="Lippert R."/>
            <person name="Walenz B."/>
            <person name="Shatkay H."/>
            <person name="Dew I."/>
            <person name="Miller J.R."/>
            <person name="Flanigan M.J."/>
            <person name="Edwards N.J."/>
            <person name="Bolanos R."/>
            <person name="Fasulo D."/>
            <person name="Halldorsson B.V."/>
            <person name="Hannenhalli S."/>
            <person name="Turner R."/>
            <person name="Yooseph S."/>
            <person name="Lu F."/>
            <person name="Nusskern D.R."/>
            <person name="Shue B.C."/>
            <person name="Zheng X.H."/>
            <person name="Zhong F."/>
            <person name="Delcher A.L."/>
            <person name="Huson D.H."/>
            <person name="Kravitz S.A."/>
            <person name="Mouchard L."/>
            <person name="Reinert K."/>
            <person name="Remington K.A."/>
            <person name="Clark A.G."/>
            <person name="Waterman M.S."/>
            <person name="Eichler E.E."/>
            <person name="Adams M.D."/>
            <person name="Hunkapiller M.W."/>
            <person name="Myers E.W."/>
            <person name="Venter J.C."/>
        </authorList>
    </citation>
    <scope>NUCLEOTIDE SEQUENCE [LARGE SCALE GENOMIC DNA]</scope>
</reference>
<reference key="11">
    <citation type="journal article" date="2004" name="Genome Res.">
        <title>The status, quality, and expansion of the NIH full-length cDNA project: the Mammalian Gene Collection (MGC).</title>
        <authorList>
            <consortium name="The MGC Project Team"/>
        </authorList>
    </citation>
    <scope>NUCLEOTIDE SEQUENCE [LARGE SCALE MRNA]</scope>
    <source>
        <tissue>Brain</tissue>
    </source>
</reference>
<reference key="12">
    <citation type="submission" date="1996-07" db="EMBL/GenBank/DDBJ databases">
        <title>Expression of a MCP-4 like novel CC-chemokine in human dermal fibroblasts: molecular cloning and RT-PCR analysis.</title>
        <authorList>
            <person name="Bartels J.H."/>
            <person name="Schlueter C."/>
            <person name="Richter E."/>
            <person name="Noso N."/>
            <person name="Christophers E."/>
            <person name="Schroeder J.-M."/>
        </authorList>
    </citation>
    <scope>NUCLEOTIDE SEQUENCE [MRNA] OF 17-95</scope>
    <source>
        <tissue>Foreskin</tissue>
    </source>
</reference>
<reference key="13">
    <citation type="journal article" date="2008" name="Acta Crystallogr. D">
        <title>Structure of human monocyte chemoattractant protein 4 (MCP-4/CCL13).</title>
        <authorList>
            <person name="Barinka C."/>
            <person name="Prahl A."/>
            <person name="Lubkowski J."/>
        </authorList>
    </citation>
    <scope>X-RAY CRYSTALLOGRAPHY (1.7 ANGSTROMS) OF 24-98</scope>
    <scope>DISULFIDE BONDS</scope>
</reference>
<proteinExistence type="evidence at protein level"/>
<evidence type="ECO:0000269" key="1">
    <source>
    </source>
</evidence>
<evidence type="ECO:0000269" key="2">
    <source>
    </source>
</evidence>
<evidence type="ECO:0000305" key="3"/>
<evidence type="ECO:0007829" key="4">
    <source>
        <dbReference type="PDB" id="2RA4"/>
    </source>
</evidence>
<protein>
    <recommendedName>
        <fullName>C-C motif chemokine 13</fullName>
    </recommendedName>
    <alternativeName>
        <fullName>CK-beta-10</fullName>
    </alternativeName>
    <alternativeName>
        <fullName>Monocyte chemoattractant protein 4</fullName>
    </alternativeName>
    <alternativeName>
        <fullName>Monocyte chemotactic protein 4</fullName>
        <shortName>MCP-4</shortName>
    </alternativeName>
    <alternativeName>
        <fullName>NCC-1</fullName>
    </alternativeName>
    <alternativeName>
        <fullName>Small-inducible cytokine A13</fullName>
    </alternativeName>
    <component>
        <recommendedName>
            <fullName>C-C motif chemokine 13, long chain</fullName>
        </recommendedName>
    </component>
    <component>
        <recommendedName>
            <fullName>C-C motif chemokine 13, medium chain</fullName>
        </recommendedName>
    </component>
    <component>
        <recommendedName>
            <fullName>C-C motif chemokine 13, short chain</fullName>
        </recommendedName>
    </component>
</protein>
<comment type="function">
    <text>Chemotactic factor that attracts monocytes, lymphocytes, basophils and eosinophils, but not neutrophils. Signals through CCR2B and CCR3 receptors. Plays a role in the accumulation of leukocytes at both sides of allergic and non-allergic inflammation. May be involved in the recruitment of monocytes into the arterial wall during the disease process of atherosclerosis. May play a role in the monocyte attraction in tissues chronically exposed to exogenous pathogens.</text>
</comment>
<comment type="interaction">
    <interactant intactId="EBI-725342">
        <id>Q99616</id>
    </interactant>
    <interactant intactId="EBI-953695">
        <id>O00585</id>
        <label>CCL21</label>
    </interactant>
    <organismsDiffer>false</organismsDiffer>
    <experiments>2</experiments>
</comment>
<comment type="interaction">
    <interactant intactId="EBI-725342">
        <id>Q99616</id>
    </interactant>
    <interactant intactId="EBI-7783416">
        <id>Q9Y258</id>
        <label>CCL26</label>
    </interactant>
    <organismsDiffer>false</organismsDiffer>
    <experiments>2</experiments>
</comment>
<comment type="interaction">
    <interactant intactId="EBI-725342">
        <id>Q99616</id>
    </interactant>
    <interactant intactId="EBI-2848366">
        <id>P13501</id>
        <label>CCL5</label>
    </interactant>
    <organismsDiffer>false</organismsDiffer>
    <experiments>3</experiments>
</comment>
<comment type="interaction">
    <interactant intactId="EBI-725342">
        <id>Q99616</id>
    </interactant>
    <interactant intactId="EBI-7815386">
        <id>P02778</id>
        <label>CXCL10</label>
    </interactant>
    <organismsDiffer>false</organismsDiffer>
    <experiments>2</experiments>
</comment>
<comment type="interaction">
    <interactant intactId="EBI-725342">
        <id>Q99616</id>
    </interactant>
    <interactant intactId="EBI-2871971">
        <id>O14625</id>
        <label>CXCL11</label>
    </interactant>
    <organismsDiffer>false</organismsDiffer>
    <experiments>2</experiments>
</comment>
<comment type="interaction">
    <interactant intactId="EBI-725342">
        <id>Q99616</id>
    </interactant>
    <interactant intactId="EBI-3913254">
        <id>P48061</id>
        <label>CXCL12</label>
    </interactant>
    <organismsDiffer>false</organismsDiffer>
    <experiments>2</experiments>
</comment>
<comment type="interaction">
    <interactant intactId="EBI-725342">
        <id>Q99616</id>
    </interactant>
    <interactant intactId="EBI-2565740">
        <id>P02776</id>
        <label>PF4</label>
    </interactant>
    <organismsDiffer>false</organismsDiffer>
    <experiments>2</experiments>
</comment>
<comment type="interaction">
    <interactant intactId="EBI-725342">
        <id>Q99616</id>
    </interactant>
    <interactant intactId="EBI-10209901">
        <id>P47992</id>
        <label>XCL1</label>
    </interactant>
    <organismsDiffer>false</organismsDiffer>
    <experiments>2</experiments>
</comment>
<comment type="subcellular location">
    <subcellularLocation>
        <location>Secreted</location>
    </subcellularLocation>
</comment>
<comment type="tissue specificity">
    <text>Widely expressed. Found in small intestine, thymus, colon, lung, trachea, stomach and lymph node. Low levels seen in the pulmonary artery smooth muscle cells.</text>
</comment>
<comment type="induction">
    <text>By IL1/interleukin-1 and TNF.</text>
</comment>
<comment type="PTM">
    <text>One major form (form long), and two minor forms (short chain and medium chain) are produced by differential signal peptide cleavage. The medium chain is about 30-fold less active than the long chain.</text>
</comment>
<comment type="mass spectrometry">
    <molecule>C-C motif chemokine 13, long chain</molecule>
</comment>
<comment type="mass spectrometry">
    <molecule>C-C motif chemokine 13, medium chain</molecule>
</comment>
<comment type="mass spectrometry">
    <molecule>C-C motif chemokine 13, short chain</molecule>
</comment>
<comment type="miscellaneous">
    <text>This protein can bind heparin.</text>
</comment>
<comment type="similarity">
    <text evidence="3">Belongs to the intercrine beta (chemokine CC) family.</text>
</comment>
<comment type="online information" name="Wikipedia">
    <link uri="https://en.wikipedia.org/wiki/CCL13"/>
    <text>CCL13 entry</text>
</comment>
<name>CCL13_HUMAN</name>
<feature type="signal peptide" evidence="2">
    <location>
        <begin position="1"/>
        <end position="16"/>
    </location>
</feature>
<feature type="chain" id="PRO_0000005201" description="C-C motif chemokine 13, long chain">
    <location>
        <begin position="17"/>
        <end position="98"/>
    </location>
</feature>
<feature type="chain" id="PRO_0000005202" description="C-C motif chemokine 13, medium chain">
    <location>
        <begin position="22"/>
        <end position="98"/>
    </location>
</feature>
<feature type="chain" id="PRO_0000005203" description="C-C motif chemokine 13, short chain">
    <location>
        <begin position="24"/>
        <end position="98"/>
    </location>
</feature>
<feature type="modified residue" description="Pyrrolidone carboxylic acid; in short chain" evidence="2">
    <location>
        <position position="24"/>
    </location>
</feature>
<feature type="disulfide bond" evidence="1">
    <location>
        <begin position="34"/>
        <end position="58"/>
    </location>
</feature>
<feature type="disulfide bond" evidence="1">
    <location>
        <begin position="35"/>
        <end position="74"/>
    </location>
</feature>
<feature type="sequence variant" id="VAR_024169" description="In dbSNP:rs3136677.">
    <original>A</original>
    <variation>S</variation>
    <location>
        <position position="5"/>
    </location>
</feature>
<feature type="sequence variant" id="VAR_048706" description="In dbSNP:rs34566308.">
    <original>N</original>
    <variation>S</variation>
    <location>
        <position position="29"/>
    </location>
</feature>
<feature type="sequence conflict" description="In Ref. 12; CAB01111." evidence="3" ref="12">
    <original>AHTLKT</original>
    <variation>LTP</variation>
    <location>
        <begin position="93"/>
        <end position="98"/>
    </location>
</feature>
<feature type="strand" evidence="4">
    <location>
        <begin position="32"/>
        <end position="34"/>
    </location>
</feature>
<feature type="helix" evidence="4">
    <location>
        <begin position="45"/>
        <end position="47"/>
    </location>
</feature>
<feature type="strand" evidence="4">
    <location>
        <begin position="48"/>
        <end position="53"/>
    </location>
</feature>
<feature type="strand" evidence="4">
    <location>
        <begin position="58"/>
        <end position="60"/>
    </location>
</feature>
<feature type="strand" evidence="4">
    <location>
        <begin position="63"/>
        <end position="67"/>
    </location>
</feature>
<feature type="strand" evidence="4">
    <location>
        <begin position="72"/>
        <end position="75"/>
    </location>
</feature>
<feature type="helix" evidence="4">
    <location>
        <begin position="80"/>
        <end position="89"/>
    </location>
</feature>
<dbReference type="EMBL" id="U46767">
    <property type="protein sequence ID" value="AAB38703.1"/>
    <property type="molecule type" value="mRNA"/>
</dbReference>
<dbReference type="EMBL" id="X98306">
    <property type="protein sequence ID" value="CAA66950.1"/>
    <property type="molecule type" value="mRNA"/>
</dbReference>
<dbReference type="EMBL" id="U59808">
    <property type="protein sequence ID" value="AAD09362.1"/>
    <property type="molecule type" value="mRNA"/>
</dbReference>
<dbReference type="EMBL" id="AJ001634">
    <property type="protein sequence ID" value="CAA04888.1"/>
    <property type="molecule type" value="mRNA"/>
</dbReference>
<dbReference type="EMBL" id="BT007385">
    <property type="protein sequence ID" value="AAP36049.1"/>
    <property type="molecule type" value="mRNA"/>
</dbReference>
<dbReference type="EMBL" id="AC002482">
    <property type="protein sequence ID" value="AAB67307.1"/>
    <property type="molecule type" value="Genomic_DNA"/>
</dbReference>
<dbReference type="EMBL" id="CR450337">
    <property type="protein sequence ID" value="CAG29333.1"/>
    <property type="molecule type" value="mRNA"/>
</dbReference>
<dbReference type="EMBL" id="CH471147">
    <property type="protein sequence ID" value="EAW80206.1"/>
    <property type="molecule type" value="Genomic_DNA"/>
</dbReference>
<dbReference type="EMBL" id="BC008621">
    <property type="protein sequence ID" value="AAH08621.1"/>
    <property type="molecule type" value="mRNA"/>
</dbReference>
<dbReference type="EMBL" id="Z77650">
    <property type="protein sequence ID" value="CAB01111.1"/>
    <property type="molecule type" value="mRNA"/>
</dbReference>
<dbReference type="CCDS" id="CCDS11281.1"/>
<dbReference type="RefSeq" id="NP_005399.1">
    <property type="nucleotide sequence ID" value="NM_005408.3"/>
</dbReference>
<dbReference type="PDB" id="2RA4">
    <property type="method" value="X-ray"/>
    <property type="resolution" value="1.70 A"/>
    <property type="chains" value="A/B=24-98"/>
</dbReference>
<dbReference type="PDBsum" id="2RA4"/>
<dbReference type="SMR" id="Q99616"/>
<dbReference type="BioGRID" id="112260">
    <property type="interactions" value="21"/>
</dbReference>
<dbReference type="DIP" id="DIP-5874N"/>
<dbReference type="FunCoup" id="Q99616">
    <property type="interactions" value="621"/>
</dbReference>
<dbReference type="IntAct" id="Q99616">
    <property type="interactions" value="18"/>
</dbReference>
<dbReference type="STRING" id="9606.ENSP00000225844"/>
<dbReference type="BioMuta" id="CCL13"/>
<dbReference type="DMDM" id="3024128"/>
<dbReference type="MassIVE" id="Q99616"/>
<dbReference type="PaxDb" id="9606-ENSP00000225844"/>
<dbReference type="PeptideAtlas" id="Q99616"/>
<dbReference type="Antibodypedia" id="15496">
    <property type="antibodies" value="412 antibodies from 27 providers"/>
</dbReference>
<dbReference type="DNASU" id="6357"/>
<dbReference type="Ensembl" id="ENST00000225844.7">
    <property type="protein sequence ID" value="ENSP00000225844.2"/>
    <property type="gene ID" value="ENSG00000181374.8"/>
</dbReference>
<dbReference type="GeneID" id="6357"/>
<dbReference type="KEGG" id="hsa:6357"/>
<dbReference type="MANE-Select" id="ENST00000225844.7">
    <property type="protein sequence ID" value="ENSP00000225844.2"/>
    <property type="RefSeq nucleotide sequence ID" value="NM_005408.3"/>
    <property type="RefSeq protein sequence ID" value="NP_005399.1"/>
</dbReference>
<dbReference type="UCSC" id="uc002hic.3">
    <property type="organism name" value="human"/>
</dbReference>
<dbReference type="AGR" id="HGNC:10611"/>
<dbReference type="CTD" id="6357"/>
<dbReference type="DisGeNET" id="6357"/>
<dbReference type="GeneCards" id="CCL13"/>
<dbReference type="HGNC" id="HGNC:10611">
    <property type="gene designation" value="CCL13"/>
</dbReference>
<dbReference type="HPA" id="ENSG00000181374">
    <property type="expression patterns" value="Tissue enhanced (intestine, urinary bladder)"/>
</dbReference>
<dbReference type="MIM" id="601391">
    <property type="type" value="gene"/>
</dbReference>
<dbReference type="neXtProt" id="NX_Q99616"/>
<dbReference type="OpenTargets" id="ENSG00000181374"/>
<dbReference type="PharmGKB" id="PA35544"/>
<dbReference type="VEuPathDB" id="HostDB:ENSG00000181374"/>
<dbReference type="eggNOG" id="ENOG502S776">
    <property type="taxonomic scope" value="Eukaryota"/>
</dbReference>
<dbReference type="GeneTree" id="ENSGT01130000278316"/>
<dbReference type="HOGENOM" id="CLU_141716_1_0_1"/>
<dbReference type="InParanoid" id="Q99616"/>
<dbReference type="OMA" id="STCCFIF"/>
<dbReference type="OrthoDB" id="9404618at2759"/>
<dbReference type="PAN-GO" id="Q99616">
    <property type="GO annotations" value="15 GO annotations based on evolutionary models"/>
</dbReference>
<dbReference type="PhylomeDB" id="Q99616"/>
<dbReference type="TreeFam" id="TF334888"/>
<dbReference type="PathwayCommons" id="Q99616"/>
<dbReference type="Reactome" id="R-HSA-380108">
    <property type="pathway name" value="Chemokine receptors bind chemokines"/>
</dbReference>
<dbReference type="Reactome" id="R-HSA-418594">
    <property type="pathway name" value="G alpha (i) signalling events"/>
</dbReference>
<dbReference type="SignaLink" id="Q99616"/>
<dbReference type="BioGRID-ORCS" id="6357">
    <property type="hits" value="15 hits in 1133 CRISPR screens"/>
</dbReference>
<dbReference type="EvolutionaryTrace" id="Q99616"/>
<dbReference type="GenomeRNAi" id="6357"/>
<dbReference type="Pharos" id="Q99616">
    <property type="development level" value="Tbio"/>
</dbReference>
<dbReference type="PRO" id="PR:Q99616"/>
<dbReference type="Proteomes" id="UP000005640">
    <property type="component" value="Chromosome 17"/>
</dbReference>
<dbReference type="RNAct" id="Q99616">
    <property type="molecule type" value="protein"/>
</dbReference>
<dbReference type="Bgee" id="ENSG00000181374">
    <property type="expression patterns" value="Expressed in primordial germ cell in gonad and 123 other cell types or tissues"/>
</dbReference>
<dbReference type="ExpressionAtlas" id="Q99616">
    <property type="expression patterns" value="baseline and differential"/>
</dbReference>
<dbReference type="GO" id="GO:0005576">
    <property type="term" value="C:extracellular region"/>
    <property type="evidence" value="ECO:0000304"/>
    <property type="project" value="Reactome"/>
</dbReference>
<dbReference type="GO" id="GO:0005615">
    <property type="term" value="C:extracellular space"/>
    <property type="evidence" value="ECO:0000318"/>
    <property type="project" value="GO_Central"/>
</dbReference>
<dbReference type="GO" id="GO:0048020">
    <property type="term" value="F:CCR chemokine receptor binding"/>
    <property type="evidence" value="ECO:0000318"/>
    <property type="project" value="GO_Central"/>
</dbReference>
<dbReference type="GO" id="GO:0008009">
    <property type="term" value="F:chemokine activity"/>
    <property type="evidence" value="ECO:0000314"/>
    <property type="project" value="UniProtKB"/>
</dbReference>
<dbReference type="GO" id="GO:0005102">
    <property type="term" value="F:signaling receptor binding"/>
    <property type="evidence" value="ECO:0000304"/>
    <property type="project" value="ProtInc"/>
</dbReference>
<dbReference type="GO" id="GO:0061844">
    <property type="term" value="P:antimicrobial humoral immune response mediated by antimicrobial peptide"/>
    <property type="evidence" value="ECO:0000314"/>
    <property type="project" value="UniProtKB"/>
</dbReference>
<dbReference type="GO" id="GO:0007267">
    <property type="term" value="P:cell-cell signaling"/>
    <property type="evidence" value="ECO:0000304"/>
    <property type="project" value="ProtInc"/>
</dbReference>
<dbReference type="GO" id="GO:0070098">
    <property type="term" value="P:chemokine-mediated signaling pathway"/>
    <property type="evidence" value="ECO:0000318"/>
    <property type="project" value="GO_Central"/>
</dbReference>
<dbReference type="GO" id="GO:0006935">
    <property type="term" value="P:chemotaxis"/>
    <property type="evidence" value="ECO:0000304"/>
    <property type="project" value="ProtInc"/>
</dbReference>
<dbReference type="GO" id="GO:0007010">
    <property type="term" value="P:cytoskeleton organization"/>
    <property type="evidence" value="ECO:0000314"/>
    <property type="project" value="UniProtKB"/>
</dbReference>
<dbReference type="GO" id="GO:0048245">
    <property type="term" value="P:eosinophil chemotaxis"/>
    <property type="evidence" value="ECO:0000314"/>
    <property type="project" value="UniProtKB"/>
</dbReference>
<dbReference type="GO" id="GO:0006954">
    <property type="term" value="P:inflammatory response"/>
    <property type="evidence" value="ECO:0000318"/>
    <property type="project" value="GO_Central"/>
</dbReference>
<dbReference type="GO" id="GO:0006874">
    <property type="term" value="P:intracellular calcium ion homeostasis"/>
    <property type="evidence" value="ECO:0000304"/>
    <property type="project" value="ProtInc"/>
</dbReference>
<dbReference type="GO" id="GO:0031640">
    <property type="term" value="P:killing of cells of another organism"/>
    <property type="evidence" value="ECO:0000314"/>
    <property type="project" value="UniProtKB"/>
</dbReference>
<dbReference type="GO" id="GO:0030335">
    <property type="term" value="P:positive regulation of cell migration"/>
    <property type="evidence" value="ECO:0000318"/>
    <property type="project" value="GO_Central"/>
</dbReference>
<dbReference type="GO" id="GO:0008360">
    <property type="term" value="P:regulation of cell shape"/>
    <property type="evidence" value="ECO:0000314"/>
    <property type="project" value="UniProtKB"/>
</dbReference>
<dbReference type="GO" id="GO:0007165">
    <property type="term" value="P:signal transduction"/>
    <property type="evidence" value="ECO:0000304"/>
    <property type="project" value="ProtInc"/>
</dbReference>
<dbReference type="CDD" id="cd00272">
    <property type="entry name" value="Chemokine_CC"/>
    <property type="match status" value="1"/>
</dbReference>
<dbReference type="FunFam" id="2.40.50.40:FF:000002">
    <property type="entry name" value="C-C motif chemokine"/>
    <property type="match status" value="1"/>
</dbReference>
<dbReference type="Gene3D" id="2.40.50.40">
    <property type="match status" value="1"/>
</dbReference>
<dbReference type="InterPro" id="IPR039809">
    <property type="entry name" value="Chemokine_b/g/d"/>
</dbReference>
<dbReference type="InterPro" id="IPR000827">
    <property type="entry name" value="Chemokine_CC_CS"/>
</dbReference>
<dbReference type="InterPro" id="IPR001811">
    <property type="entry name" value="Chemokine_IL8-like_dom"/>
</dbReference>
<dbReference type="InterPro" id="IPR036048">
    <property type="entry name" value="Interleukin_8-like_sf"/>
</dbReference>
<dbReference type="PANTHER" id="PTHR12015:SF147">
    <property type="entry name" value="C-C MOTIF CHEMOKINE 13"/>
    <property type="match status" value="1"/>
</dbReference>
<dbReference type="PANTHER" id="PTHR12015">
    <property type="entry name" value="SMALL INDUCIBLE CYTOKINE A"/>
    <property type="match status" value="1"/>
</dbReference>
<dbReference type="Pfam" id="PF00048">
    <property type="entry name" value="IL8"/>
    <property type="match status" value="1"/>
</dbReference>
<dbReference type="SMART" id="SM00199">
    <property type="entry name" value="SCY"/>
    <property type="match status" value="1"/>
</dbReference>
<dbReference type="SUPFAM" id="SSF54117">
    <property type="entry name" value="Interleukin 8-like chemokines"/>
    <property type="match status" value="1"/>
</dbReference>
<dbReference type="PROSITE" id="PS00472">
    <property type="entry name" value="SMALL_CYTOKINES_CC"/>
    <property type="match status" value="1"/>
</dbReference>
<gene>
    <name type="primary">CCL13</name>
    <name type="synonym">MCP4</name>
    <name type="synonym">NCC1</name>
    <name type="synonym">SCYA13</name>
</gene>
<organism>
    <name type="scientific">Homo sapiens</name>
    <name type="common">Human</name>
    <dbReference type="NCBI Taxonomy" id="9606"/>
    <lineage>
        <taxon>Eukaryota</taxon>
        <taxon>Metazoa</taxon>
        <taxon>Chordata</taxon>
        <taxon>Craniata</taxon>
        <taxon>Vertebrata</taxon>
        <taxon>Euteleostomi</taxon>
        <taxon>Mammalia</taxon>
        <taxon>Eutheria</taxon>
        <taxon>Euarchontoglires</taxon>
        <taxon>Primates</taxon>
        <taxon>Haplorrhini</taxon>
        <taxon>Catarrhini</taxon>
        <taxon>Hominidae</taxon>
        <taxon>Homo</taxon>
    </lineage>
</organism>